<evidence type="ECO:0000255" key="1">
    <source>
        <dbReference type="HAMAP-Rule" id="MF_03123"/>
    </source>
</evidence>
<evidence type="ECO:0000255" key="2">
    <source>
        <dbReference type="PROSITE-ProRule" id="PRU01266"/>
    </source>
</evidence>
<accession>C5M276</accession>
<comment type="function">
    <text evidence="1">Catalyzes the radical-mediated insertion of two sulfur atoms into the C-6 and C-8 positions of the octanoyl moiety bound to the lipoyl domains of lipoate-dependent enzymes, thereby converting the octanoylated domains into lipoylated derivatives.</text>
</comment>
<comment type="catalytic activity">
    <reaction evidence="1">
        <text>[[Fe-S] cluster scaffold protein carrying a second [4Fe-4S](2+) cluster] + N(6)-octanoyl-L-lysyl-[protein] + 2 oxidized [2Fe-2S]-[ferredoxin] + 2 S-adenosyl-L-methionine + 4 H(+) = [[Fe-S] cluster scaffold protein] + N(6)-[(R)-dihydrolipoyl]-L-lysyl-[protein] + 4 Fe(3+) + 2 hydrogen sulfide + 2 5'-deoxyadenosine + 2 L-methionine + 2 reduced [2Fe-2S]-[ferredoxin]</text>
        <dbReference type="Rhea" id="RHEA:16585"/>
        <dbReference type="Rhea" id="RHEA-COMP:9928"/>
        <dbReference type="Rhea" id="RHEA-COMP:10000"/>
        <dbReference type="Rhea" id="RHEA-COMP:10001"/>
        <dbReference type="Rhea" id="RHEA-COMP:10475"/>
        <dbReference type="Rhea" id="RHEA-COMP:14568"/>
        <dbReference type="Rhea" id="RHEA-COMP:14569"/>
        <dbReference type="ChEBI" id="CHEBI:15378"/>
        <dbReference type="ChEBI" id="CHEBI:17319"/>
        <dbReference type="ChEBI" id="CHEBI:29034"/>
        <dbReference type="ChEBI" id="CHEBI:29919"/>
        <dbReference type="ChEBI" id="CHEBI:33722"/>
        <dbReference type="ChEBI" id="CHEBI:33737"/>
        <dbReference type="ChEBI" id="CHEBI:33738"/>
        <dbReference type="ChEBI" id="CHEBI:57844"/>
        <dbReference type="ChEBI" id="CHEBI:59789"/>
        <dbReference type="ChEBI" id="CHEBI:78809"/>
        <dbReference type="ChEBI" id="CHEBI:83100"/>
        <dbReference type="EC" id="2.8.1.8"/>
    </reaction>
</comment>
<comment type="cofactor">
    <cofactor evidence="1">
        <name>[4Fe-4S] cluster</name>
        <dbReference type="ChEBI" id="CHEBI:49883"/>
    </cofactor>
    <text evidence="1">Binds 2 [4Fe-4S] clusters per subunit. One cluster is coordinated with 3 cysteines and an exchangeable S-adenosyl-L-methionine.</text>
</comment>
<comment type="pathway">
    <text evidence="1">Protein modification; protein lipoylation via endogenous pathway; protein N(6)-(lipoyl)lysine from octanoyl-[acyl-carrier-protein]: step 2/2.</text>
</comment>
<comment type="subcellular location">
    <subcellularLocation>
        <location evidence="1">Mitochondrion</location>
    </subcellularLocation>
</comment>
<comment type="miscellaneous">
    <text evidence="1">This protein may be expected to contain an N-terminal transit peptide but none has been predicted.</text>
</comment>
<comment type="similarity">
    <text evidence="1">Belongs to the radical SAM superfamily. Lipoyl synthase family.</text>
</comment>
<dbReference type="EC" id="2.8.1.8" evidence="1"/>
<dbReference type="EMBL" id="GG692395">
    <property type="protein sequence ID" value="EER35426.1"/>
    <property type="molecule type" value="Genomic_DNA"/>
</dbReference>
<dbReference type="RefSeq" id="XP_002545384.1">
    <property type="nucleotide sequence ID" value="XM_002545338.1"/>
</dbReference>
<dbReference type="SMR" id="C5M276"/>
<dbReference type="STRING" id="294747.C5M276"/>
<dbReference type="EnsemblFungi" id="CTRG_00165-t43_1">
    <property type="protein sequence ID" value="CTRG_00165-t43_1-p1"/>
    <property type="gene ID" value="CTRG_00165"/>
</dbReference>
<dbReference type="GeneID" id="8301163"/>
<dbReference type="KEGG" id="ctp:CTRG_00165"/>
<dbReference type="VEuPathDB" id="FungiDB:CTRG_00165"/>
<dbReference type="eggNOG" id="KOG2672">
    <property type="taxonomic scope" value="Eukaryota"/>
</dbReference>
<dbReference type="HOGENOM" id="CLU_033144_2_0_1"/>
<dbReference type="OrthoDB" id="3231at2759"/>
<dbReference type="UniPathway" id="UPA00538">
    <property type="reaction ID" value="UER00593"/>
</dbReference>
<dbReference type="Proteomes" id="UP000002037">
    <property type="component" value="Unassembled WGS sequence"/>
</dbReference>
<dbReference type="GO" id="GO:0005739">
    <property type="term" value="C:mitochondrion"/>
    <property type="evidence" value="ECO:0007669"/>
    <property type="project" value="UniProtKB-SubCell"/>
</dbReference>
<dbReference type="GO" id="GO:0051539">
    <property type="term" value="F:4 iron, 4 sulfur cluster binding"/>
    <property type="evidence" value="ECO:0007669"/>
    <property type="project" value="UniProtKB-UniRule"/>
</dbReference>
<dbReference type="GO" id="GO:0016992">
    <property type="term" value="F:lipoate synthase activity"/>
    <property type="evidence" value="ECO:0007669"/>
    <property type="project" value="UniProtKB-UniRule"/>
</dbReference>
<dbReference type="GO" id="GO:0046872">
    <property type="term" value="F:metal ion binding"/>
    <property type="evidence" value="ECO:0007669"/>
    <property type="project" value="UniProtKB-KW"/>
</dbReference>
<dbReference type="CDD" id="cd01335">
    <property type="entry name" value="Radical_SAM"/>
    <property type="match status" value="1"/>
</dbReference>
<dbReference type="FunFam" id="3.20.20.70:FF:000036">
    <property type="entry name" value="Lipoyl synthase, mitochondrial"/>
    <property type="match status" value="1"/>
</dbReference>
<dbReference type="Gene3D" id="3.20.20.70">
    <property type="entry name" value="Aldolase class I"/>
    <property type="match status" value="1"/>
</dbReference>
<dbReference type="HAMAP" id="MF_00206">
    <property type="entry name" value="Lipoyl_synth"/>
    <property type="match status" value="1"/>
</dbReference>
<dbReference type="InterPro" id="IPR013785">
    <property type="entry name" value="Aldolase_TIM"/>
</dbReference>
<dbReference type="InterPro" id="IPR006638">
    <property type="entry name" value="Elp3/MiaA/NifB-like_rSAM"/>
</dbReference>
<dbReference type="InterPro" id="IPR031691">
    <property type="entry name" value="LIAS_N"/>
</dbReference>
<dbReference type="InterPro" id="IPR003698">
    <property type="entry name" value="Lipoyl_synth"/>
</dbReference>
<dbReference type="InterPro" id="IPR007197">
    <property type="entry name" value="rSAM"/>
</dbReference>
<dbReference type="NCBIfam" id="TIGR00510">
    <property type="entry name" value="lipA"/>
    <property type="match status" value="1"/>
</dbReference>
<dbReference type="NCBIfam" id="NF004019">
    <property type="entry name" value="PRK05481.1"/>
    <property type="match status" value="1"/>
</dbReference>
<dbReference type="NCBIfam" id="NF009544">
    <property type="entry name" value="PRK12928.1"/>
    <property type="match status" value="1"/>
</dbReference>
<dbReference type="PANTHER" id="PTHR10949">
    <property type="entry name" value="LIPOYL SYNTHASE"/>
    <property type="match status" value="1"/>
</dbReference>
<dbReference type="PANTHER" id="PTHR10949:SF0">
    <property type="entry name" value="LIPOYL SYNTHASE, MITOCHONDRIAL"/>
    <property type="match status" value="1"/>
</dbReference>
<dbReference type="Pfam" id="PF16881">
    <property type="entry name" value="LIAS_N"/>
    <property type="match status" value="1"/>
</dbReference>
<dbReference type="Pfam" id="PF04055">
    <property type="entry name" value="Radical_SAM"/>
    <property type="match status" value="1"/>
</dbReference>
<dbReference type="PIRSF" id="PIRSF005963">
    <property type="entry name" value="Lipoyl_synth"/>
    <property type="match status" value="1"/>
</dbReference>
<dbReference type="SFLD" id="SFLDF00271">
    <property type="entry name" value="lipoyl_synthase"/>
    <property type="match status" value="1"/>
</dbReference>
<dbReference type="SFLD" id="SFLDG01058">
    <property type="entry name" value="lipoyl_synthase_like"/>
    <property type="match status" value="1"/>
</dbReference>
<dbReference type="SMART" id="SM00729">
    <property type="entry name" value="Elp3"/>
    <property type="match status" value="1"/>
</dbReference>
<dbReference type="SUPFAM" id="SSF102114">
    <property type="entry name" value="Radical SAM enzymes"/>
    <property type="match status" value="1"/>
</dbReference>
<dbReference type="PROSITE" id="PS51918">
    <property type="entry name" value="RADICAL_SAM"/>
    <property type="match status" value="1"/>
</dbReference>
<gene>
    <name type="ORF">CTRG_00165</name>
</gene>
<keyword id="KW-0004">4Fe-4S</keyword>
<keyword id="KW-0408">Iron</keyword>
<keyword id="KW-0411">Iron-sulfur</keyword>
<keyword id="KW-0479">Metal-binding</keyword>
<keyword id="KW-0496">Mitochondrion</keyword>
<keyword id="KW-1185">Reference proteome</keyword>
<keyword id="KW-0949">S-adenosyl-L-methionine</keyword>
<keyword id="KW-0808">Transferase</keyword>
<proteinExistence type="inferred from homology"/>
<sequence>MISRTPLFRTSIPIQRTLATNVKPRRKRTVFTDELNKGPSFEDFVSGKAKDMMEDPLELARKDPNAKLPKWLKVPIPKGKSFHNVKKDVRELKLSTVCEEAKCPNISECWGGKKSEATATIMLLGDTCTRGCRFCSVKTNRKPAAPDPNEPENTAEAIKRWGLGYVVLTTVDRDDLVDGGARHLAETVEKIKQKAPQILVEVLGGDFRGDLDMVEILANSGLDVYAHNLETVEDLTPHIRDRRATYRQSLAVLERAKKTKPSLVTKTSLMLGFGETDEQIMKTLKDLREIGCDVVTFGQYMRPTKRHMKVVEYVTPEKFDYWRDTALDMGFLYVASGPLVRSSYKAGEAFIENVLKKRRHNVGETPRLQSVAKPSVY</sequence>
<reference key="1">
    <citation type="journal article" date="2009" name="Nature">
        <title>Evolution of pathogenicity and sexual reproduction in eight Candida genomes.</title>
        <authorList>
            <person name="Butler G."/>
            <person name="Rasmussen M.D."/>
            <person name="Lin M.F."/>
            <person name="Santos M.A.S."/>
            <person name="Sakthikumar S."/>
            <person name="Munro C.A."/>
            <person name="Rheinbay E."/>
            <person name="Grabherr M."/>
            <person name="Forche A."/>
            <person name="Reedy J.L."/>
            <person name="Agrafioti I."/>
            <person name="Arnaud M.B."/>
            <person name="Bates S."/>
            <person name="Brown A.J.P."/>
            <person name="Brunke S."/>
            <person name="Costanzo M.C."/>
            <person name="Fitzpatrick D.A."/>
            <person name="de Groot P.W.J."/>
            <person name="Harris D."/>
            <person name="Hoyer L.L."/>
            <person name="Hube B."/>
            <person name="Klis F.M."/>
            <person name="Kodira C."/>
            <person name="Lennard N."/>
            <person name="Logue M.E."/>
            <person name="Martin R."/>
            <person name="Neiman A.M."/>
            <person name="Nikolaou E."/>
            <person name="Quail M.A."/>
            <person name="Quinn J."/>
            <person name="Santos M.C."/>
            <person name="Schmitzberger F.F."/>
            <person name="Sherlock G."/>
            <person name="Shah P."/>
            <person name="Silverstein K.A.T."/>
            <person name="Skrzypek M.S."/>
            <person name="Soll D."/>
            <person name="Staggs R."/>
            <person name="Stansfield I."/>
            <person name="Stumpf M.P.H."/>
            <person name="Sudbery P.E."/>
            <person name="Srikantha T."/>
            <person name="Zeng Q."/>
            <person name="Berman J."/>
            <person name="Berriman M."/>
            <person name="Heitman J."/>
            <person name="Gow N.A.R."/>
            <person name="Lorenz M.C."/>
            <person name="Birren B.W."/>
            <person name="Kellis M."/>
            <person name="Cuomo C.A."/>
        </authorList>
    </citation>
    <scope>NUCLEOTIDE SEQUENCE [LARGE SCALE GENOMIC DNA]</scope>
    <source>
        <strain>ATCC MYA-3404 / T1</strain>
    </source>
</reference>
<feature type="chain" id="PRO_0000398261" description="Lipoyl synthase, mitochondrial">
    <location>
        <begin position="1"/>
        <end position="377"/>
    </location>
</feature>
<feature type="domain" description="Radical SAM core" evidence="2">
    <location>
        <begin position="113"/>
        <end position="332"/>
    </location>
</feature>
<feature type="binding site" evidence="1">
    <location>
        <position position="98"/>
    </location>
    <ligand>
        <name>[4Fe-4S] cluster</name>
        <dbReference type="ChEBI" id="CHEBI:49883"/>
        <label>1</label>
    </ligand>
</feature>
<feature type="binding site" evidence="1">
    <location>
        <position position="103"/>
    </location>
    <ligand>
        <name>[4Fe-4S] cluster</name>
        <dbReference type="ChEBI" id="CHEBI:49883"/>
        <label>1</label>
    </ligand>
</feature>
<feature type="binding site" evidence="1">
    <location>
        <position position="109"/>
    </location>
    <ligand>
        <name>[4Fe-4S] cluster</name>
        <dbReference type="ChEBI" id="CHEBI:49883"/>
        <label>1</label>
    </ligand>
</feature>
<feature type="binding site" evidence="1">
    <location>
        <position position="128"/>
    </location>
    <ligand>
        <name>[4Fe-4S] cluster</name>
        <dbReference type="ChEBI" id="CHEBI:49883"/>
        <label>2</label>
        <note>4Fe-4S-S-AdoMet</note>
    </ligand>
</feature>
<feature type="binding site" evidence="1">
    <location>
        <position position="132"/>
    </location>
    <ligand>
        <name>[4Fe-4S] cluster</name>
        <dbReference type="ChEBI" id="CHEBI:49883"/>
        <label>2</label>
        <note>4Fe-4S-S-AdoMet</note>
    </ligand>
</feature>
<feature type="binding site" evidence="1">
    <location>
        <position position="135"/>
    </location>
    <ligand>
        <name>[4Fe-4S] cluster</name>
        <dbReference type="ChEBI" id="CHEBI:49883"/>
        <label>2</label>
        <note>4Fe-4S-S-AdoMet</note>
    </ligand>
</feature>
<feature type="binding site" evidence="1">
    <location>
        <position position="343"/>
    </location>
    <ligand>
        <name>[4Fe-4S] cluster</name>
        <dbReference type="ChEBI" id="CHEBI:49883"/>
        <label>1</label>
    </ligand>
</feature>
<organism>
    <name type="scientific">Candida tropicalis (strain ATCC MYA-3404 / T1)</name>
    <name type="common">Yeast</name>
    <dbReference type="NCBI Taxonomy" id="294747"/>
    <lineage>
        <taxon>Eukaryota</taxon>
        <taxon>Fungi</taxon>
        <taxon>Dikarya</taxon>
        <taxon>Ascomycota</taxon>
        <taxon>Saccharomycotina</taxon>
        <taxon>Pichiomycetes</taxon>
        <taxon>Debaryomycetaceae</taxon>
        <taxon>Candida/Lodderomyces clade</taxon>
        <taxon>Candida</taxon>
    </lineage>
</organism>
<protein>
    <recommendedName>
        <fullName evidence="1">Lipoyl synthase, mitochondrial</fullName>
        <ecNumber evidence="1">2.8.1.8</ecNumber>
    </recommendedName>
    <alternativeName>
        <fullName evidence="1">Lipoate synthase</fullName>
        <shortName evidence="1">LS</shortName>
        <shortName evidence="1">Lip-syn</shortName>
    </alternativeName>
    <alternativeName>
        <fullName evidence="1">Lipoic acid synthase</fullName>
    </alternativeName>
</protein>
<name>LIPA_CANTT</name>